<gene>
    <name evidence="1" type="primary">rps14</name>
</gene>
<keyword id="KW-0150">Chloroplast</keyword>
<keyword id="KW-0934">Plastid</keyword>
<keyword id="KW-1185">Reference proteome</keyword>
<keyword id="KW-0687">Ribonucleoprotein</keyword>
<keyword id="KW-0689">Ribosomal protein</keyword>
<keyword id="KW-0694">RNA-binding</keyword>
<keyword id="KW-0699">rRNA-binding</keyword>
<comment type="function">
    <text evidence="1">Binds 16S rRNA, required for the assembly of 30S particles.</text>
</comment>
<comment type="subunit">
    <text evidence="1">Part of the 30S ribosomal subunit.</text>
</comment>
<comment type="subcellular location">
    <subcellularLocation>
        <location>Plastid</location>
        <location>Chloroplast</location>
    </subcellularLocation>
</comment>
<comment type="similarity">
    <text evidence="1">Belongs to the universal ribosomal protein uS14 family.</text>
</comment>
<name>RR14_MAIZE</name>
<dbReference type="EMBL" id="Y00359">
    <property type="protein sequence ID" value="CAA68437.1"/>
    <property type="molecule type" value="Genomic_DNA"/>
</dbReference>
<dbReference type="EMBL" id="M16559">
    <property type="protein sequence ID" value="AAA84487.1"/>
    <property type="molecule type" value="Genomic_DNA"/>
</dbReference>
<dbReference type="EMBL" id="X86563">
    <property type="protein sequence ID" value="CAA60284.1"/>
    <property type="molecule type" value="Genomic_DNA"/>
</dbReference>
<dbReference type="PIR" id="S00640">
    <property type="entry name" value="R3ZM14"/>
</dbReference>
<dbReference type="RefSeq" id="NP_043023.1">
    <property type="nucleotide sequence ID" value="NC_001666.2"/>
</dbReference>
<dbReference type="SMR" id="P08527"/>
<dbReference type="FunCoup" id="P08527">
    <property type="interactions" value="3"/>
</dbReference>
<dbReference type="STRING" id="4577.P08527"/>
<dbReference type="GeneID" id="845229"/>
<dbReference type="KEGG" id="zma:845229"/>
<dbReference type="MaizeGDB" id="67126"/>
<dbReference type="InParanoid" id="P08527"/>
<dbReference type="OrthoDB" id="413436at2759"/>
<dbReference type="Proteomes" id="UP000007305">
    <property type="component" value="Chloroplast"/>
</dbReference>
<dbReference type="GO" id="GO:0009507">
    <property type="term" value="C:chloroplast"/>
    <property type="evidence" value="ECO:0007669"/>
    <property type="project" value="UniProtKB-SubCell"/>
</dbReference>
<dbReference type="GO" id="GO:0015935">
    <property type="term" value="C:small ribosomal subunit"/>
    <property type="evidence" value="ECO:0000318"/>
    <property type="project" value="GO_Central"/>
</dbReference>
<dbReference type="GO" id="GO:0019843">
    <property type="term" value="F:rRNA binding"/>
    <property type="evidence" value="ECO:0007669"/>
    <property type="project" value="UniProtKB-UniRule"/>
</dbReference>
<dbReference type="GO" id="GO:0003735">
    <property type="term" value="F:structural constituent of ribosome"/>
    <property type="evidence" value="ECO:0000318"/>
    <property type="project" value="GO_Central"/>
</dbReference>
<dbReference type="GO" id="GO:0006412">
    <property type="term" value="P:translation"/>
    <property type="evidence" value="ECO:0000318"/>
    <property type="project" value="GO_Central"/>
</dbReference>
<dbReference type="FunFam" id="1.10.287.1480:FF:000001">
    <property type="entry name" value="30S ribosomal protein S14"/>
    <property type="match status" value="1"/>
</dbReference>
<dbReference type="Gene3D" id="1.10.287.1480">
    <property type="match status" value="1"/>
</dbReference>
<dbReference type="HAMAP" id="MF_00537">
    <property type="entry name" value="Ribosomal_uS14_1"/>
    <property type="match status" value="1"/>
</dbReference>
<dbReference type="InterPro" id="IPR001209">
    <property type="entry name" value="Ribosomal_uS14"/>
</dbReference>
<dbReference type="InterPro" id="IPR023036">
    <property type="entry name" value="Ribosomal_uS14_bac/plastid"/>
</dbReference>
<dbReference type="InterPro" id="IPR018271">
    <property type="entry name" value="Ribosomal_uS14_CS"/>
</dbReference>
<dbReference type="NCBIfam" id="NF006477">
    <property type="entry name" value="PRK08881.1"/>
    <property type="match status" value="1"/>
</dbReference>
<dbReference type="PANTHER" id="PTHR19836">
    <property type="entry name" value="30S RIBOSOMAL PROTEIN S14"/>
    <property type="match status" value="1"/>
</dbReference>
<dbReference type="PANTHER" id="PTHR19836:SF19">
    <property type="entry name" value="SMALL RIBOSOMAL SUBUNIT PROTEIN US14M"/>
    <property type="match status" value="1"/>
</dbReference>
<dbReference type="Pfam" id="PF00253">
    <property type="entry name" value="Ribosomal_S14"/>
    <property type="match status" value="1"/>
</dbReference>
<dbReference type="SUPFAM" id="SSF57716">
    <property type="entry name" value="Glucocorticoid receptor-like (DNA-binding domain)"/>
    <property type="match status" value="1"/>
</dbReference>
<dbReference type="PROSITE" id="PS00527">
    <property type="entry name" value="RIBOSOMAL_S14"/>
    <property type="match status" value="1"/>
</dbReference>
<reference key="1">
    <citation type="journal article" date="1987" name="Nucleic Acids Res.">
        <title>The transcription termination region between two convergently-transcribed photoregulated operons in the maize plastid chromosome contains rps14, trnR (UCU) and a putative trnfM pseudogene.</title>
        <authorList>
            <person name="Rodermel S."/>
            <person name="Orlin P."/>
            <person name="Bogorad L."/>
        </authorList>
    </citation>
    <scope>NUCLEOTIDE SEQUENCE [LARGE SCALE GENOMIC DNA]</scope>
    <source>
        <strain>cv. B73</strain>
    </source>
</reference>
<reference key="2">
    <citation type="journal article" date="1987" name="Biochemistry">
        <title>Nucleotide sequence and linkage map position of the gene for maize chloroplast ribosomal protein S14.</title>
        <authorList>
            <person name="Srinivasa B.R."/>
            <person name="Subramanian A.R."/>
        </authorList>
    </citation>
    <scope>NUCLEOTIDE SEQUENCE [GENOMIC DNA]</scope>
</reference>
<reference key="3">
    <citation type="journal article" date="1995" name="J. Mol. Biol.">
        <title>Complete sequence of the maize chloroplast genome: gene content, hotspots of divergence and fine tuning of genetic information by transcript editing.</title>
        <authorList>
            <person name="Maier R.M."/>
            <person name="Neckermann K."/>
            <person name="Igloi G.L."/>
            <person name="Koessel H."/>
        </authorList>
    </citation>
    <scope>NUCLEOTIDE SEQUENCE [LARGE SCALE GENOMIC DNA]</scope>
    <source>
        <strain>cv. B73</strain>
    </source>
</reference>
<proteinExistence type="inferred from homology"/>
<sequence length="103" mass="12122">MAKKSLIQREKKRQKLEQKYHLIRRSSKKKIRSKVSPLSLSEKTKMQEKLQSLPRNSAPTRLHRRCFLTGRPRANYRDFGLSGHILREMVYACLLPGATRSSW</sequence>
<organism>
    <name type="scientific">Zea mays</name>
    <name type="common">Maize</name>
    <dbReference type="NCBI Taxonomy" id="4577"/>
    <lineage>
        <taxon>Eukaryota</taxon>
        <taxon>Viridiplantae</taxon>
        <taxon>Streptophyta</taxon>
        <taxon>Embryophyta</taxon>
        <taxon>Tracheophyta</taxon>
        <taxon>Spermatophyta</taxon>
        <taxon>Magnoliopsida</taxon>
        <taxon>Liliopsida</taxon>
        <taxon>Poales</taxon>
        <taxon>Poaceae</taxon>
        <taxon>PACMAD clade</taxon>
        <taxon>Panicoideae</taxon>
        <taxon>Andropogonodae</taxon>
        <taxon>Andropogoneae</taxon>
        <taxon>Tripsacinae</taxon>
        <taxon>Zea</taxon>
    </lineage>
</organism>
<geneLocation type="chloroplast"/>
<accession>P08527</accession>
<protein>
    <recommendedName>
        <fullName evidence="1">Small ribosomal subunit protein uS14c</fullName>
    </recommendedName>
    <alternativeName>
        <fullName evidence="3">30S ribosomal protein S14, chloroplastic</fullName>
    </alternativeName>
</protein>
<evidence type="ECO:0000255" key="1">
    <source>
        <dbReference type="HAMAP-Rule" id="MF_00537"/>
    </source>
</evidence>
<evidence type="ECO:0000256" key="2">
    <source>
        <dbReference type="SAM" id="MobiDB-lite"/>
    </source>
</evidence>
<evidence type="ECO:0000305" key="3"/>
<feature type="chain" id="PRO_0000130975" description="Small ribosomal subunit protein uS14c">
    <location>
        <begin position="1"/>
        <end position="103"/>
    </location>
</feature>
<feature type="region of interest" description="Disordered" evidence="2">
    <location>
        <begin position="27"/>
        <end position="56"/>
    </location>
</feature>
<feature type="sequence conflict" description="In Ref. 1; CAA68437." evidence="3" ref="1">
    <original>E</original>
    <variation>Q</variation>
    <location>
        <position position="10"/>
    </location>
</feature>
<feature type="sequence conflict" description="In Ref. 2; AAA84487." evidence="3" ref="2">
    <original>L</original>
    <variation>F</variation>
    <location>
        <position position="40"/>
    </location>
</feature>